<gene>
    <name type="primary">sbi</name>
    <name type="ordered locus">SAV2418</name>
</gene>
<organism>
    <name type="scientific">Staphylococcus aureus (strain Mu50 / ATCC 700699)</name>
    <dbReference type="NCBI Taxonomy" id="158878"/>
    <lineage>
        <taxon>Bacteria</taxon>
        <taxon>Bacillati</taxon>
        <taxon>Bacillota</taxon>
        <taxon>Bacilli</taxon>
        <taxon>Bacillales</taxon>
        <taxon>Staphylococcaceae</taxon>
        <taxon>Staphylococcus</taxon>
    </lineage>
</organism>
<feature type="signal peptide" evidence="2">
    <location>
        <begin position="1"/>
        <end position="29"/>
    </location>
</feature>
<feature type="chain" id="PRO_0000361891" description="Immunoglobulin-binding protein Sbi">
    <location>
        <begin position="30"/>
        <end position="426"/>
    </location>
</feature>
<feature type="repeat" description="B 1">
    <location>
        <begin position="43"/>
        <end position="94"/>
    </location>
</feature>
<feature type="repeat" description="B 2">
    <location>
        <begin position="95"/>
        <end position="148"/>
    </location>
</feature>
<feature type="repeat" description="2-1">
    <location>
        <begin position="267"/>
        <end position="271"/>
    </location>
</feature>
<feature type="repeat" description="2-2">
    <location>
        <begin position="272"/>
        <end position="276"/>
    </location>
</feature>
<feature type="repeat" description="2-3">
    <location>
        <begin position="277"/>
        <end position="281"/>
    </location>
</feature>
<feature type="repeat" description="2-4">
    <location>
        <begin position="282"/>
        <end position="286"/>
    </location>
</feature>
<feature type="repeat" description="2-5">
    <location>
        <begin position="287"/>
        <end position="291"/>
    </location>
</feature>
<feature type="repeat" description="2-6">
    <location>
        <begin position="292"/>
        <end position="296"/>
    </location>
</feature>
<feature type="region of interest" description="Sbi-I">
    <location>
        <begin position="42"/>
        <end position="94"/>
    </location>
</feature>
<feature type="region of interest" description="Sbi-II">
    <location>
        <begin position="103"/>
        <end position="153"/>
    </location>
</feature>
<feature type="region of interest" description="Sbi-III">
    <location>
        <begin position="154"/>
        <end position="195"/>
    </location>
</feature>
<feature type="region of interest" description="Sbi-IV">
    <location>
        <begin position="196"/>
        <end position="253"/>
    </location>
</feature>
<feature type="region of interest" description="Disordered" evidence="3">
    <location>
        <begin position="266"/>
        <end position="287"/>
    </location>
</feature>
<feature type="region of interest" description="6 X 5 AA tandem repeat of P-[KQ]-[AISV]-[EKQ]-[AKLSV]">
    <location>
        <begin position="267"/>
        <end position="296"/>
    </location>
</feature>
<feature type="mutagenesis site" description="Abolishes binding to complement component C3 derivatives and inhibition of the alternative pathway." evidence="6">
    <original>R</original>
    <variation>A</variation>
    <location>
        <position position="231"/>
    </location>
</feature>
<feature type="mutagenesis site" description="Abolishes binding to complement component C3 derivatives and inhibition of the alternative pathway." evidence="6">
    <original>N</original>
    <variation>A</variation>
    <location>
        <position position="238"/>
    </location>
</feature>
<feature type="helix" evidence="10">
    <location>
        <begin position="202"/>
        <end position="223"/>
    </location>
</feature>
<feature type="helix" evidence="10">
    <location>
        <begin position="227"/>
        <end position="237"/>
    </location>
</feature>
<feature type="helix" evidence="10">
    <location>
        <begin position="242"/>
        <end position="244"/>
    </location>
</feature>
<feature type="helix" evidence="10">
    <location>
        <begin position="245"/>
        <end position="263"/>
    </location>
</feature>
<name>SBI_STAAM</name>
<protein>
    <recommendedName>
        <fullName>Immunoglobulin-binding protein Sbi</fullName>
    </recommendedName>
</protein>
<accession>Q931F4</accession>
<evidence type="ECO:0000250" key="1">
    <source>
        <dbReference type="UniProtKB" id="A6QJQ7"/>
    </source>
</evidence>
<evidence type="ECO:0000255" key="2"/>
<evidence type="ECO:0000256" key="3">
    <source>
        <dbReference type="SAM" id="MobiDB-lite"/>
    </source>
</evidence>
<evidence type="ECO:0000269" key="4">
    <source>
    </source>
</evidence>
<evidence type="ECO:0000269" key="5">
    <source>
    </source>
</evidence>
<evidence type="ECO:0000269" key="6">
    <source>
    </source>
</evidence>
<evidence type="ECO:0000305" key="7"/>
<evidence type="ECO:0007744" key="8">
    <source>
        <dbReference type="PDB" id="2JVG"/>
    </source>
</evidence>
<evidence type="ECO:0007744" key="9">
    <source>
        <dbReference type="PDB" id="2JVH"/>
    </source>
</evidence>
<evidence type="ECO:0007829" key="10">
    <source>
        <dbReference type="PDB" id="2JVG"/>
    </source>
</evidence>
<reference key="1">
    <citation type="journal article" date="2001" name="Lancet">
        <title>Whole genome sequencing of meticillin-resistant Staphylococcus aureus.</title>
        <authorList>
            <person name="Kuroda M."/>
            <person name="Ohta T."/>
            <person name="Uchiyama I."/>
            <person name="Baba T."/>
            <person name="Yuzawa H."/>
            <person name="Kobayashi I."/>
            <person name="Cui L."/>
            <person name="Oguchi A."/>
            <person name="Aoki K."/>
            <person name="Nagai Y."/>
            <person name="Lian J.-Q."/>
            <person name="Ito T."/>
            <person name="Kanamori M."/>
            <person name="Matsumaru H."/>
            <person name="Maruyama A."/>
            <person name="Murakami H."/>
            <person name="Hosoyama A."/>
            <person name="Mizutani-Ui Y."/>
            <person name="Takahashi N.K."/>
            <person name="Sawano T."/>
            <person name="Inoue R."/>
            <person name="Kaito C."/>
            <person name="Sekimizu K."/>
            <person name="Hirakawa H."/>
            <person name="Kuhara S."/>
            <person name="Goto S."/>
            <person name="Yabuzaki J."/>
            <person name="Kanehisa M."/>
            <person name="Yamashita A."/>
            <person name="Oshima K."/>
            <person name="Furuya K."/>
            <person name="Yoshino C."/>
            <person name="Shiba T."/>
            <person name="Hattori M."/>
            <person name="Ogasawara N."/>
            <person name="Hayashi H."/>
            <person name="Hiramatsu K."/>
        </authorList>
    </citation>
    <scope>NUCLEOTIDE SEQUENCE [LARGE SCALE GENOMIC DNA]</scope>
    <source>
        <strain>Mu50 / ATCC 700699</strain>
    </source>
</reference>
<reference key="2">
    <citation type="journal article" date="2008" name="J. Biol. Chem.">
        <title>Interaction of human complement with Sbi, a staphylococcal immunoglobulin-binding protein. Indications of a novel mechanism of complement evasion by Staphylococcus aureus.</title>
        <authorList>
            <person name="Burman J.D."/>
            <person name="Leung E."/>
            <person name="Atkins K.L."/>
            <person name="O'Seaghdha M.N."/>
            <person name="Lango L."/>
            <person name="Bernado P."/>
            <person name="Bagby S."/>
            <person name="Svergun D.I."/>
            <person name="Foster T.J."/>
            <person name="Isenman D.E."/>
            <person name="van den Elsen J.M.H."/>
        </authorList>
    </citation>
    <scope>INTERACTION WITH COMPONENT C3 AND IMMUNOGLOBULIN G</scope>
    <scope>SUBCELLULAR LOCATION</scope>
    <scope>DOMAIN STRUCTURE</scope>
</reference>
<reference key="3">
    <citation type="journal article" date="2008" name="Mol. Immunol.">
        <title>S. aureus IgG-binding proteins SpA and Sbi: host specificity and mechanisms of immune complex formation.</title>
        <authorList>
            <person name="Atkins K.L."/>
            <person name="Burman J.D."/>
            <person name="Chamberlain E.S."/>
            <person name="Cooper J.E."/>
            <person name="Poutrel B."/>
            <person name="Bagby S."/>
            <person name="Jenkins A.T.A."/>
            <person name="Feil E.J."/>
            <person name="van den Elsen J.M.H."/>
        </authorList>
    </citation>
    <scope>INTERACTION WITH THE FC REGION OF IMMUNOGLOBULIN G</scope>
</reference>
<reference evidence="8 9" key="4">
    <citation type="journal article" date="2008" name="J. Biol. Chem.">
        <title>Structure-function analysis of the C3-binding region of Staphylococcus aureus immune subversion protein Sbi.</title>
        <authorList>
            <person name="Upadhyay A."/>
            <person name="Burman J.D."/>
            <person name="Clark E.A."/>
            <person name="Leung E."/>
            <person name="Isenman D.E."/>
            <person name="van den Elsen J.M.H."/>
            <person name="Bagby S."/>
        </authorList>
    </citation>
    <scope>STRUCTURE BY NMR OF 198-266</scope>
    <scope>FUNCTION</scope>
    <scope>SUBUNIT</scope>
    <scope>MUTAGENESIS OF ARG-231 AND ASN-238</scope>
</reference>
<comment type="function">
    <text evidence="1 6">Plays a role in the inhibition of both the innate and adaptive immune responses. Possesses two N-terminal domains that bind the Fc region of IgG and two domains that form a tripartite complex with complement factors C3b and CFH. By recruiting CFH and C3b, the secreted form acts as a potent complement inhibitor of the alternative pathway-mediated lysis.</text>
</comment>
<comment type="subunit">
    <text evidence="1 4 5 6">Interacts (via sbi-I and sbi-II domains) with the Fc region of mammalian immunoglobulin G (IgG) proteins. Interacts (via sbi-III and sbi-IV domains) with host complement C3. Interacts (via sbi-III and sbi-IV domains) with host CFH (By similarity). Interacts (via sbi-IV domain) with beta-2-glycoprotein 1/APOH (PubMed:18061675, PubMed:18434316, PubMed:18550524).</text>
</comment>
<comment type="subcellular location">
    <subcellularLocation>
        <location evidence="1">Secreted</location>
    </subcellularLocation>
    <subcellularLocation>
        <location evidence="1">Cell membrane</location>
    </subcellularLocation>
    <text evidence="1">Occurs both extracellularly and associated with the cytoplasmic membrane where only the domains I and II are exposed to the extracellular media. Membrane association occurs via binding to lipoteichoic acid.</text>
</comment>
<comment type="domain">
    <text evidence="1">Sbi-I and sbi-II domains provide protection only when anchored to the cell surface, whereas only the secreted sbi-III and sbi-IV domains are biologically active.</text>
</comment>
<comment type="similarity">
    <text evidence="7">Belongs to the immunoglobulin-binding protein Sbi family.</text>
</comment>
<keyword id="KW-0002">3D-structure</keyword>
<keyword id="KW-1003">Cell membrane</keyword>
<keyword id="KW-0390">IgG-binding protein</keyword>
<keyword id="KW-0472">Membrane</keyword>
<keyword id="KW-0677">Repeat</keyword>
<keyword id="KW-0964">Secreted</keyword>
<keyword id="KW-0732">Signal</keyword>
<keyword id="KW-0843">Virulence</keyword>
<sequence>MKNKYISKLLVGAATITLATMISNGEAKASENTQQTSTKHQTTQNNYVTDQQKAFYQVLHLKGITEEQRNQYIKTLREHPERAQEVFSESLKDSKNPDRRVAQQNAFYNVLKNDNLTEQEKNNYIAQIKENPDRSQQVWVESVQSSKAKERQNIENADKAIKDFQDNKAPHDKSAAYEANSKLPKDLRDKNNRFVEKVSIEKAIVRHDERVKSANDAISKLNEKDSIENRRLAQREVNKAPMDVKEHLQKQLDALVAQKDAEKKVAPKVEAPQIQSPQIEKPKAESPKVEVPQSKLLGYYQSLKDSFNYGYKYLTDTYKSYKEKYDTAKYYYNTYYKYKGAIDQTVLTVLGSGSKSYIQPLKVDDKNGYLAKSYAQVRNYVTESINTGKVLYTFYQNPTLVKTAIKAQETASSIKNTLSNLLSFWK</sequence>
<proteinExistence type="evidence at protein level"/>
<dbReference type="EMBL" id="BA000017">
    <property type="protein sequence ID" value="BAB58580.2"/>
    <property type="molecule type" value="Genomic_DNA"/>
</dbReference>
<dbReference type="RefSeq" id="WP_000792562.1">
    <property type="nucleotide sequence ID" value="NC_002758.2"/>
</dbReference>
<dbReference type="PDB" id="2JVG">
    <property type="method" value="NMR"/>
    <property type="chains" value="A=198-266"/>
</dbReference>
<dbReference type="PDB" id="2JVH">
    <property type="method" value="NMR"/>
    <property type="chains" value="A=198-266"/>
</dbReference>
<dbReference type="PDBsum" id="2JVG"/>
<dbReference type="PDBsum" id="2JVH"/>
<dbReference type="SMR" id="Q931F4"/>
<dbReference type="KEGG" id="sav:SAV2418"/>
<dbReference type="HOGENOM" id="CLU_051343_0_0_9"/>
<dbReference type="EvolutionaryTrace" id="Q931F4"/>
<dbReference type="PRO" id="PR:Q931F4"/>
<dbReference type="Proteomes" id="UP000002481">
    <property type="component" value="Chromosome"/>
</dbReference>
<dbReference type="GO" id="GO:0005576">
    <property type="term" value="C:extracellular region"/>
    <property type="evidence" value="ECO:0007669"/>
    <property type="project" value="UniProtKB-SubCell"/>
</dbReference>
<dbReference type="GO" id="GO:0005886">
    <property type="term" value="C:plasma membrane"/>
    <property type="evidence" value="ECO:0007669"/>
    <property type="project" value="UniProtKB-SubCell"/>
</dbReference>
<dbReference type="GO" id="GO:0019864">
    <property type="term" value="F:IgG binding"/>
    <property type="evidence" value="ECO:0007669"/>
    <property type="project" value="UniProtKB-KW"/>
</dbReference>
<dbReference type="Gene3D" id="1.20.5.420">
    <property type="entry name" value="Immunoglobulin FC, subunit C"/>
    <property type="match status" value="2"/>
</dbReference>
<dbReference type="Gene3D" id="1.10.10.1270">
    <property type="entry name" value="Sbi, C3 binding domain IV"/>
    <property type="match status" value="1"/>
</dbReference>
<dbReference type="InterPro" id="IPR009063">
    <property type="entry name" value="Ig/albumin-bd_sf"/>
</dbReference>
<dbReference type="InterPro" id="IPR021657">
    <property type="entry name" value="IgG-binding_Sbi_dom_IV"/>
</dbReference>
<dbReference type="InterPro" id="IPR003132">
    <property type="entry name" value="Protein_A_Ig-bd"/>
</dbReference>
<dbReference type="InterPro" id="IPR041909">
    <property type="entry name" value="Sbi_C3_db_domIV"/>
</dbReference>
<dbReference type="Pfam" id="PF02216">
    <property type="entry name" value="B"/>
    <property type="match status" value="2"/>
</dbReference>
<dbReference type="Pfam" id="PF11621">
    <property type="entry name" value="Sbi-IV"/>
    <property type="match status" value="1"/>
</dbReference>
<dbReference type="SUPFAM" id="SSF46997">
    <property type="entry name" value="Bacterial immunoglobulin/albumin-binding domains"/>
    <property type="match status" value="2"/>
</dbReference>